<name>OB10_DROME</name>
<feature type="signal peptide" evidence="1">
    <location>
        <begin position="1"/>
        <end position="29"/>
    </location>
</feature>
<feature type="chain" id="PRO_0000021874" description="Putative odorant-binding protein A10">
    <location>
        <begin position="30"/>
        <end position="155"/>
    </location>
</feature>
<feature type="sequence conflict" description="In Ref. 1; AAC46473 and 2; AAA21358." evidence="2" ref="1 2">
    <original>V</original>
    <variation>F</variation>
    <location>
        <position position="13"/>
    </location>
</feature>
<accession>Q27377</accession>
<accession>Q3LB26</accession>
<accession>Q9VVD1</accession>
<comment type="subcellular location">
    <subcellularLocation>
        <location evidence="2">Secreted</location>
    </subcellularLocation>
</comment>
<comment type="tissue specificity">
    <text>Antenna. In the third antennal segment. Expressed in sencilla coeloconica.</text>
</comment>
<comment type="developmental stage">
    <text>Expressed in adult but not in larval olfactory organs.</text>
</comment>
<comment type="similarity">
    <text evidence="2">Belongs to the insect A10/OS-D protein family.</text>
</comment>
<gene>
    <name type="primary">a10</name>
    <name type="synonym">OS-D</name>
    <name type="ORF">CG6642</name>
</gene>
<dbReference type="EMBL" id="U05244">
    <property type="protein sequence ID" value="AAC46473.1"/>
    <property type="molecule type" value="mRNA"/>
</dbReference>
<dbReference type="EMBL" id="U02546">
    <property type="protein sequence ID" value="AAA21358.1"/>
    <property type="molecule type" value="mRNA"/>
</dbReference>
<dbReference type="EMBL" id="AJ973480">
    <property type="protein sequence ID" value="CAJ01527.1"/>
    <property type="molecule type" value="mRNA"/>
</dbReference>
<dbReference type="EMBL" id="AE014296">
    <property type="protein sequence ID" value="AAF49381.1"/>
    <property type="molecule type" value="Genomic_DNA"/>
</dbReference>
<dbReference type="EMBL" id="BT025814">
    <property type="protein sequence ID" value="ABF85714.1"/>
    <property type="molecule type" value="mRNA"/>
</dbReference>
<dbReference type="RefSeq" id="NP_524121.2">
    <property type="nucleotide sequence ID" value="NM_079397.3"/>
</dbReference>
<dbReference type="SMR" id="Q27377"/>
<dbReference type="BioGRID" id="65201">
    <property type="interactions" value="1"/>
</dbReference>
<dbReference type="FunCoup" id="Q27377">
    <property type="interactions" value="6"/>
</dbReference>
<dbReference type="IntAct" id="Q27377">
    <property type="interactions" value="20"/>
</dbReference>
<dbReference type="STRING" id="7227.FBpp0075050"/>
<dbReference type="PaxDb" id="7227-FBpp0075050"/>
<dbReference type="DNASU" id="39906"/>
<dbReference type="EnsemblMetazoa" id="FBtr0075290">
    <property type="protein sequence ID" value="FBpp0075050"/>
    <property type="gene ID" value="FBgn0011293"/>
</dbReference>
<dbReference type="GeneID" id="39906"/>
<dbReference type="KEGG" id="dme:Dmel_CG6642"/>
<dbReference type="AGR" id="FB:FBgn0011293"/>
<dbReference type="CTD" id="39906"/>
<dbReference type="FlyBase" id="FBgn0011293">
    <property type="gene designation" value="a10"/>
</dbReference>
<dbReference type="VEuPathDB" id="VectorBase:FBgn0011293"/>
<dbReference type="eggNOG" id="ENOG502S48A">
    <property type="taxonomic scope" value="Eukaryota"/>
</dbReference>
<dbReference type="GeneTree" id="ENSGT00390000011556"/>
<dbReference type="HOGENOM" id="CLU_1564538_0_0_1"/>
<dbReference type="InParanoid" id="Q27377"/>
<dbReference type="OMA" id="ILPDAMM"/>
<dbReference type="OrthoDB" id="8183954at2759"/>
<dbReference type="PhylomeDB" id="Q27377"/>
<dbReference type="BioGRID-ORCS" id="39906">
    <property type="hits" value="0 hits in 1 CRISPR screen"/>
</dbReference>
<dbReference type="GenomeRNAi" id="39906"/>
<dbReference type="PRO" id="PR:Q27377"/>
<dbReference type="Proteomes" id="UP000000803">
    <property type="component" value="Chromosome 3L"/>
</dbReference>
<dbReference type="Bgee" id="FBgn0011293">
    <property type="expression patterns" value="Expressed in adult glial cell (Drosophila) in antenna and 82 other cell types or tissues"/>
</dbReference>
<dbReference type="ExpressionAtlas" id="Q27377">
    <property type="expression patterns" value="baseline and differential"/>
</dbReference>
<dbReference type="GO" id="GO:0005576">
    <property type="term" value="C:extracellular region"/>
    <property type="evidence" value="ECO:0000255"/>
    <property type="project" value="FlyBase"/>
</dbReference>
<dbReference type="FunFam" id="1.10.2080.10:FF:000001">
    <property type="entry name" value="ejaculatory bulb-specific protein 3"/>
    <property type="match status" value="1"/>
</dbReference>
<dbReference type="Gene3D" id="1.10.2080.10">
    <property type="entry name" value="Insect odorant-binding protein A10/Ejaculatory bulb-specific protein 3"/>
    <property type="match status" value="1"/>
</dbReference>
<dbReference type="InterPro" id="IPR005055">
    <property type="entry name" value="A10/PebIII"/>
</dbReference>
<dbReference type="InterPro" id="IPR036682">
    <property type="entry name" value="OS_D_A10/PebIII_sf"/>
</dbReference>
<dbReference type="PANTHER" id="PTHR11257">
    <property type="entry name" value="CHEMOSENSORY PROTEIN-RELATED"/>
    <property type="match status" value="1"/>
</dbReference>
<dbReference type="PANTHER" id="PTHR11257:SF12">
    <property type="entry name" value="EJACULATORY BULB-SPECIFIC PROTEIN 3-RELATED"/>
    <property type="match status" value="1"/>
</dbReference>
<dbReference type="Pfam" id="PF03392">
    <property type="entry name" value="OS-D"/>
    <property type="match status" value="1"/>
</dbReference>
<dbReference type="SUPFAM" id="SSF100910">
    <property type="entry name" value="Chemosensory protein Csp2"/>
    <property type="match status" value="1"/>
</dbReference>
<reference key="1">
    <citation type="journal article" date="1994" name="Neuron">
        <title>Members of a family of Drosophila putative odorant-binding proteins are expressed in different subsets of olfactory hairs.</title>
        <authorList>
            <person name="Pikielny C.W."/>
            <person name="Hasan G."/>
            <person name="Rouyer F."/>
            <person name="Rosbash M."/>
        </authorList>
    </citation>
    <scope>NUCLEOTIDE SEQUENCE [MRNA]</scope>
    <source>
        <strain>Canton-S</strain>
        <tissue>Antenna</tissue>
    </source>
</reference>
<reference key="2">
    <citation type="journal article" date="1994" name="J. Biol. Chem.">
        <title>Putative Drosophila pheromone-binding proteins expressed in a subregion of the olfactory system.</title>
        <authorList>
            <person name="McKenna M.P."/>
            <person name="Hekmat-Scafe D.S."/>
            <person name="Gaines P."/>
            <person name="Carlson J.R."/>
        </authorList>
    </citation>
    <scope>NUCLEOTIDE SEQUENCE [MRNA]</scope>
    <source>
        <strain>CS-5</strain>
        <tissue>Antenna</tissue>
    </source>
</reference>
<reference key="3">
    <citation type="journal article" date="2006" name="Chem. Senses">
        <title>Genome and EST analyses and expression of a gene family with putative functions in insect chemoreception.</title>
        <authorList>
            <person name="Zhou J.-J."/>
            <person name="Kan Y."/>
            <person name="Antoniw J."/>
            <person name="Pickett J.A."/>
            <person name="Field L.M."/>
        </authorList>
    </citation>
    <scope>NUCLEOTIDE SEQUENCE [MRNA]</scope>
</reference>
<reference key="4">
    <citation type="journal article" date="2000" name="Science">
        <title>The genome sequence of Drosophila melanogaster.</title>
        <authorList>
            <person name="Adams M.D."/>
            <person name="Celniker S.E."/>
            <person name="Holt R.A."/>
            <person name="Evans C.A."/>
            <person name="Gocayne J.D."/>
            <person name="Amanatides P.G."/>
            <person name="Scherer S.E."/>
            <person name="Li P.W."/>
            <person name="Hoskins R.A."/>
            <person name="Galle R.F."/>
            <person name="George R.A."/>
            <person name="Lewis S.E."/>
            <person name="Richards S."/>
            <person name="Ashburner M."/>
            <person name="Henderson S.N."/>
            <person name="Sutton G.G."/>
            <person name="Wortman J.R."/>
            <person name="Yandell M.D."/>
            <person name="Zhang Q."/>
            <person name="Chen L.X."/>
            <person name="Brandon R.C."/>
            <person name="Rogers Y.-H.C."/>
            <person name="Blazej R.G."/>
            <person name="Champe M."/>
            <person name="Pfeiffer B.D."/>
            <person name="Wan K.H."/>
            <person name="Doyle C."/>
            <person name="Baxter E.G."/>
            <person name="Helt G."/>
            <person name="Nelson C.R."/>
            <person name="Miklos G.L.G."/>
            <person name="Abril J.F."/>
            <person name="Agbayani A."/>
            <person name="An H.-J."/>
            <person name="Andrews-Pfannkoch C."/>
            <person name="Baldwin D."/>
            <person name="Ballew R.M."/>
            <person name="Basu A."/>
            <person name="Baxendale J."/>
            <person name="Bayraktaroglu L."/>
            <person name="Beasley E.M."/>
            <person name="Beeson K.Y."/>
            <person name="Benos P.V."/>
            <person name="Berman B.P."/>
            <person name="Bhandari D."/>
            <person name="Bolshakov S."/>
            <person name="Borkova D."/>
            <person name="Botchan M.R."/>
            <person name="Bouck J."/>
            <person name="Brokstein P."/>
            <person name="Brottier P."/>
            <person name="Burtis K.C."/>
            <person name="Busam D.A."/>
            <person name="Butler H."/>
            <person name="Cadieu E."/>
            <person name="Center A."/>
            <person name="Chandra I."/>
            <person name="Cherry J.M."/>
            <person name="Cawley S."/>
            <person name="Dahlke C."/>
            <person name="Davenport L.B."/>
            <person name="Davies P."/>
            <person name="de Pablos B."/>
            <person name="Delcher A."/>
            <person name="Deng Z."/>
            <person name="Mays A.D."/>
            <person name="Dew I."/>
            <person name="Dietz S.M."/>
            <person name="Dodson K."/>
            <person name="Doup L.E."/>
            <person name="Downes M."/>
            <person name="Dugan-Rocha S."/>
            <person name="Dunkov B.C."/>
            <person name="Dunn P."/>
            <person name="Durbin K.J."/>
            <person name="Evangelista C.C."/>
            <person name="Ferraz C."/>
            <person name="Ferriera S."/>
            <person name="Fleischmann W."/>
            <person name="Fosler C."/>
            <person name="Gabrielian A.E."/>
            <person name="Garg N.S."/>
            <person name="Gelbart W.M."/>
            <person name="Glasser K."/>
            <person name="Glodek A."/>
            <person name="Gong F."/>
            <person name="Gorrell J.H."/>
            <person name="Gu Z."/>
            <person name="Guan P."/>
            <person name="Harris M."/>
            <person name="Harris N.L."/>
            <person name="Harvey D.A."/>
            <person name="Heiman T.J."/>
            <person name="Hernandez J.R."/>
            <person name="Houck J."/>
            <person name="Hostin D."/>
            <person name="Houston K.A."/>
            <person name="Howland T.J."/>
            <person name="Wei M.-H."/>
            <person name="Ibegwam C."/>
            <person name="Jalali M."/>
            <person name="Kalush F."/>
            <person name="Karpen G.H."/>
            <person name="Ke Z."/>
            <person name="Kennison J.A."/>
            <person name="Ketchum K.A."/>
            <person name="Kimmel B.E."/>
            <person name="Kodira C.D."/>
            <person name="Kraft C.L."/>
            <person name="Kravitz S."/>
            <person name="Kulp D."/>
            <person name="Lai Z."/>
            <person name="Lasko P."/>
            <person name="Lei Y."/>
            <person name="Levitsky A.A."/>
            <person name="Li J.H."/>
            <person name="Li Z."/>
            <person name="Liang Y."/>
            <person name="Lin X."/>
            <person name="Liu X."/>
            <person name="Mattei B."/>
            <person name="McIntosh T.C."/>
            <person name="McLeod M.P."/>
            <person name="McPherson D."/>
            <person name="Merkulov G."/>
            <person name="Milshina N.V."/>
            <person name="Mobarry C."/>
            <person name="Morris J."/>
            <person name="Moshrefi A."/>
            <person name="Mount S.M."/>
            <person name="Moy M."/>
            <person name="Murphy B."/>
            <person name="Murphy L."/>
            <person name="Muzny D.M."/>
            <person name="Nelson D.L."/>
            <person name="Nelson D.R."/>
            <person name="Nelson K.A."/>
            <person name="Nixon K."/>
            <person name="Nusskern D.R."/>
            <person name="Pacleb J.M."/>
            <person name="Palazzolo M."/>
            <person name="Pittman G.S."/>
            <person name="Pan S."/>
            <person name="Pollard J."/>
            <person name="Puri V."/>
            <person name="Reese M.G."/>
            <person name="Reinert K."/>
            <person name="Remington K."/>
            <person name="Saunders R.D.C."/>
            <person name="Scheeler F."/>
            <person name="Shen H."/>
            <person name="Shue B.C."/>
            <person name="Siden-Kiamos I."/>
            <person name="Simpson M."/>
            <person name="Skupski M.P."/>
            <person name="Smith T.J."/>
            <person name="Spier E."/>
            <person name="Spradling A.C."/>
            <person name="Stapleton M."/>
            <person name="Strong R."/>
            <person name="Sun E."/>
            <person name="Svirskas R."/>
            <person name="Tector C."/>
            <person name="Turner R."/>
            <person name="Venter E."/>
            <person name="Wang A.H."/>
            <person name="Wang X."/>
            <person name="Wang Z.-Y."/>
            <person name="Wassarman D.A."/>
            <person name="Weinstock G.M."/>
            <person name="Weissenbach J."/>
            <person name="Williams S.M."/>
            <person name="Woodage T."/>
            <person name="Worley K.C."/>
            <person name="Wu D."/>
            <person name="Yang S."/>
            <person name="Yao Q.A."/>
            <person name="Ye J."/>
            <person name="Yeh R.-F."/>
            <person name="Zaveri J.S."/>
            <person name="Zhan M."/>
            <person name="Zhang G."/>
            <person name="Zhao Q."/>
            <person name="Zheng L."/>
            <person name="Zheng X.H."/>
            <person name="Zhong F.N."/>
            <person name="Zhong W."/>
            <person name="Zhou X."/>
            <person name="Zhu S.C."/>
            <person name="Zhu X."/>
            <person name="Smith H.O."/>
            <person name="Gibbs R.A."/>
            <person name="Myers E.W."/>
            <person name="Rubin G.M."/>
            <person name="Venter J.C."/>
        </authorList>
    </citation>
    <scope>NUCLEOTIDE SEQUENCE [LARGE SCALE GENOMIC DNA]</scope>
    <source>
        <strain>Berkeley</strain>
    </source>
</reference>
<reference key="5">
    <citation type="journal article" date="2002" name="Genome Biol.">
        <title>Annotation of the Drosophila melanogaster euchromatic genome: a systematic review.</title>
        <authorList>
            <person name="Misra S."/>
            <person name="Crosby M.A."/>
            <person name="Mungall C.J."/>
            <person name="Matthews B.B."/>
            <person name="Campbell K.S."/>
            <person name="Hradecky P."/>
            <person name="Huang Y."/>
            <person name="Kaminker J.S."/>
            <person name="Millburn G.H."/>
            <person name="Prochnik S.E."/>
            <person name="Smith C.D."/>
            <person name="Tupy J.L."/>
            <person name="Whitfield E.J."/>
            <person name="Bayraktaroglu L."/>
            <person name="Berman B.P."/>
            <person name="Bettencourt B.R."/>
            <person name="Celniker S.E."/>
            <person name="de Grey A.D.N.J."/>
            <person name="Drysdale R.A."/>
            <person name="Harris N.L."/>
            <person name="Richter J."/>
            <person name="Russo S."/>
            <person name="Schroeder A.J."/>
            <person name="Shu S.Q."/>
            <person name="Stapleton M."/>
            <person name="Yamada C."/>
            <person name="Ashburner M."/>
            <person name="Gelbart W.M."/>
            <person name="Rubin G.M."/>
            <person name="Lewis S.E."/>
        </authorList>
    </citation>
    <scope>GENOME REANNOTATION</scope>
    <source>
        <strain>Berkeley</strain>
    </source>
</reference>
<reference key="6">
    <citation type="submission" date="2006-06" db="EMBL/GenBank/DDBJ databases">
        <authorList>
            <person name="Stapleton M."/>
            <person name="Carlson J.W."/>
            <person name="Chavez C."/>
            <person name="Frise E."/>
            <person name="George R.A."/>
            <person name="Pacleb J.M."/>
            <person name="Park S."/>
            <person name="Wan K.H."/>
            <person name="Yu C."/>
            <person name="Celniker S.E."/>
        </authorList>
    </citation>
    <scope>NUCLEOTIDE SEQUENCE [LARGE SCALE MRNA]</scope>
    <source>
        <strain>Berkeley</strain>
    </source>
</reference>
<organism>
    <name type="scientific">Drosophila melanogaster</name>
    <name type="common">Fruit fly</name>
    <dbReference type="NCBI Taxonomy" id="7227"/>
    <lineage>
        <taxon>Eukaryota</taxon>
        <taxon>Metazoa</taxon>
        <taxon>Ecdysozoa</taxon>
        <taxon>Arthropoda</taxon>
        <taxon>Hexapoda</taxon>
        <taxon>Insecta</taxon>
        <taxon>Pterygota</taxon>
        <taxon>Neoptera</taxon>
        <taxon>Endopterygota</taxon>
        <taxon>Diptera</taxon>
        <taxon>Brachycera</taxon>
        <taxon>Muscomorpha</taxon>
        <taxon>Ephydroidea</taxon>
        <taxon>Drosophilidae</taxon>
        <taxon>Drosophila</taxon>
        <taxon>Sophophora</taxon>
    </lineage>
</organism>
<proteinExistence type="evidence at transcript level"/>
<sequence>MGQPGFRRAIGHVSLVVALMCTTCFQVEGLPHPPATSPSPMMERMVEQAYDDKFDNVDLDEILNQERLLINYIKCLEGTGPCTPDAKMLKEILPDAIQTDCTKCTEKQRYGAEKVTRHLIDNRPTDWERLEKIYDPEGTYRIKYQEMKSKANEEP</sequence>
<keyword id="KW-1185">Reference proteome</keyword>
<keyword id="KW-0964">Secreted</keyword>
<keyword id="KW-0732">Signal</keyword>
<evidence type="ECO:0000255" key="1"/>
<evidence type="ECO:0000305" key="2"/>
<protein>
    <recommendedName>
        <fullName>Putative odorant-binding protein A10</fullName>
    </recommendedName>
    <alternativeName>
        <fullName>Antennal protein 10</fullName>
    </alternativeName>
    <alternativeName>
        <fullName>OS-D protein</fullName>
    </alternativeName>
</protein>